<dbReference type="EC" id="2.1.1.144" evidence="1"/>
<dbReference type="EMBL" id="CP001396">
    <property type="protein sequence ID" value="ACR65671.1"/>
    <property type="molecule type" value="Genomic_DNA"/>
</dbReference>
<dbReference type="RefSeq" id="WP_001286597.1">
    <property type="nucleotide sequence ID" value="NC_012759.1"/>
</dbReference>
<dbReference type="SMR" id="C4ZWT6"/>
<dbReference type="KEGG" id="ebw:BWG_1338"/>
<dbReference type="HOGENOM" id="CLU_037990_5_2_6"/>
<dbReference type="GO" id="GO:0005737">
    <property type="term" value="C:cytoplasm"/>
    <property type="evidence" value="ECO:0007669"/>
    <property type="project" value="UniProtKB-SubCell"/>
</dbReference>
<dbReference type="GO" id="GO:0030798">
    <property type="term" value="F:trans-aconitate 2-methyltransferase activity"/>
    <property type="evidence" value="ECO:0007669"/>
    <property type="project" value="UniProtKB-UniRule"/>
</dbReference>
<dbReference type="GO" id="GO:0032259">
    <property type="term" value="P:methylation"/>
    <property type="evidence" value="ECO:0007669"/>
    <property type="project" value="UniProtKB-KW"/>
</dbReference>
<dbReference type="CDD" id="cd02440">
    <property type="entry name" value="AdoMet_MTases"/>
    <property type="match status" value="1"/>
</dbReference>
<dbReference type="Gene3D" id="1.10.150.290">
    <property type="entry name" value="S-adenosyl-L-methionine-dependent methyltransferases"/>
    <property type="match status" value="1"/>
</dbReference>
<dbReference type="Gene3D" id="3.40.50.150">
    <property type="entry name" value="Vaccinia Virus protein VP39"/>
    <property type="match status" value="1"/>
</dbReference>
<dbReference type="HAMAP" id="MF_00560">
    <property type="entry name" value="Tran_acon_Me_trans"/>
    <property type="match status" value="1"/>
</dbReference>
<dbReference type="InterPro" id="IPR041698">
    <property type="entry name" value="Methyltransf_25"/>
</dbReference>
<dbReference type="InterPro" id="IPR029063">
    <property type="entry name" value="SAM-dependent_MTases_sf"/>
</dbReference>
<dbReference type="InterPro" id="IPR023506">
    <property type="entry name" value="Trans-aconitate_MeTrfase"/>
</dbReference>
<dbReference type="InterPro" id="IPR023149">
    <property type="entry name" value="Trans_acon_MeTrfase_C"/>
</dbReference>
<dbReference type="NCBIfam" id="NF002463">
    <property type="entry name" value="PRK01683.1"/>
    <property type="match status" value="1"/>
</dbReference>
<dbReference type="PANTHER" id="PTHR43861:SF1">
    <property type="entry name" value="TRANS-ACONITATE 2-METHYLTRANSFERASE"/>
    <property type="match status" value="1"/>
</dbReference>
<dbReference type="PANTHER" id="PTHR43861">
    <property type="entry name" value="TRANS-ACONITATE 2-METHYLTRANSFERASE-RELATED"/>
    <property type="match status" value="1"/>
</dbReference>
<dbReference type="Pfam" id="PF13649">
    <property type="entry name" value="Methyltransf_25"/>
    <property type="match status" value="1"/>
</dbReference>
<dbReference type="SUPFAM" id="SSF53335">
    <property type="entry name" value="S-adenosyl-L-methionine-dependent methyltransferases"/>
    <property type="match status" value="1"/>
</dbReference>
<accession>C4ZWT6</accession>
<sequence>MSDWNPSLYLHFSAERSRPAVELLARVPLENVEYVADLGCGPGNSTALLQQRWPAARITGIDSSPAMIAEARSALPDCQFVEADIRNWQPVQALDLIFANASLQWLPDHYELFPHLVSLLNPQGVLAVQMPDNWLEPTHVLMREVAWEQNYPDRGREPLAGVHAYYDILSEAGCEVDIWRTTYYHQMPSHQAIIDWVTATGLRPWLQDLTESEQQLFLKRYHQMLEEQYPLQENGQILLAFPRLFIVARRME</sequence>
<gene>
    <name evidence="1" type="primary">tam</name>
    <name type="ordered locus">BWG_1338</name>
</gene>
<feature type="chain" id="PRO_1000212042" description="Trans-aconitate 2-methyltransferase">
    <location>
        <begin position="1"/>
        <end position="252"/>
    </location>
</feature>
<reference key="1">
    <citation type="journal article" date="2009" name="J. Bacteriol.">
        <title>Genomic sequencing reveals regulatory mutations and recombinational events in the widely used MC4100 lineage of Escherichia coli K-12.</title>
        <authorList>
            <person name="Ferenci T."/>
            <person name="Zhou Z."/>
            <person name="Betteridge T."/>
            <person name="Ren Y."/>
            <person name="Liu Y."/>
            <person name="Feng L."/>
            <person name="Reeves P.R."/>
            <person name="Wang L."/>
        </authorList>
    </citation>
    <scope>NUCLEOTIDE SEQUENCE [LARGE SCALE GENOMIC DNA]</scope>
    <source>
        <strain>K12 / MC4100 / BW2952</strain>
    </source>
</reference>
<name>TAM_ECOBW</name>
<organism>
    <name type="scientific">Escherichia coli (strain K12 / MC4100 / BW2952)</name>
    <dbReference type="NCBI Taxonomy" id="595496"/>
    <lineage>
        <taxon>Bacteria</taxon>
        <taxon>Pseudomonadati</taxon>
        <taxon>Pseudomonadota</taxon>
        <taxon>Gammaproteobacteria</taxon>
        <taxon>Enterobacterales</taxon>
        <taxon>Enterobacteriaceae</taxon>
        <taxon>Escherichia</taxon>
    </lineage>
</organism>
<keyword id="KW-0963">Cytoplasm</keyword>
<keyword id="KW-0489">Methyltransferase</keyword>
<keyword id="KW-0949">S-adenosyl-L-methionine</keyword>
<keyword id="KW-0808">Transferase</keyword>
<proteinExistence type="inferred from homology"/>
<evidence type="ECO:0000255" key="1">
    <source>
        <dbReference type="HAMAP-Rule" id="MF_00560"/>
    </source>
</evidence>
<protein>
    <recommendedName>
        <fullName evidence="1">Trans-aconitate 2-methyltransferase</fullName>
        <ecNumber evidence="1">2.1.1.144</ecNumber>
    </recommendedName>
</protein>
<comment type="function">
    <text evidence="1">Catalyzes the S-adenosylmethionine monomethyl esterification of trans-aconitate.</text>
</comment>
<comment type="catalytic activity">
    <reaction evidence="1">
        <text>trans-aconitate + S-adenosyl-L-methionine = (E)-3-(methoxycarbonyl)pent-2-enedioate + S-adenosyl-L-homocysteine</text>
        <dbReference type="Rhea" id="RHEA:14969"/>
        <dbReference type="ChEBI" id="CHEBI:15708"/>
        <dbReference type="ChEBI" id="CHEBI:57470"/>
        <dbReference type="ChEBI" id="CHEBI:57856"/>
        <dbReference type="ChEBI" id="CHEBI:59789"/>
        <dbReference type="EC" id="2.1.1.144"/>
    </reaction>
</comment>
<comment type="subcellular location">
    <subcellularLocation>
        <location evidence="1">Cytoplasm</location>
    </subcellularLocation>
</comment>
<comment type="similarity">
    <text evidence="1">Belongs to the methyltransferase superfamily. Tam family.</text>
</comment>